<dbReference type="EMBL" id="EU407781">
    <property type="protein sequence ID" value="ACB06103.1"/>
    <property type="molecule type" value="Genomic_DNA"/>
</dbReference>
<dbReference type="EMBL" id="EU407782">
    <property type="protein sequence ID" value="ACB06115.1"/>
    <property type="molecule type" value="Genomic_DNA"/>
</dbReference>
<dbReference type="EMBL" id="EU407783">
    <property type="protein sequence ID" value="ACB06127.1"/>
    <property type="molecule type" value="Genomic_DNA"/>
</dbReference>
<dbReference type="EMBL" id="EU407784">
    <property type="protein sequence ID" value="ACB06139.1"/>
    <property type="molecule type" value="Genomic_DNA"/>
</dbReference>
<dbReference type="EMBL" id="EU407785">
    <property type="protein sequence ID" value="ACB06151.1"/>
    <property type="molecule type" value="Genomic_DNA"/>
</dbReference>
<dbReference type="EMBL" id="EU407786">
    <property type="protein sequence ID" value="ACB06163.1"/>
    <property type="molecule type" value="Genomic_DNA"/>
</dbReference>
<dbReference type="EMBL" id="EU407787">
    <property type="protein sequence ID" value="ACB06175.1"/>
    <property type="molecule type" value="Genomic_DNA"/>
</dbReference>
<dbReference type="EMBL" id="EU407788">
    <property type="protein sequence ID" value="ACB06187.1"/>
    <property type="molecule type" value="Genomic_DNA"/>
</dbReference>
<dbReference type="EMBL" id="EU407789">
    <property type="protein sequence ID" value="ACB06199.1"/>
    <property type="molecule type" value="Genomic_DNA"/>
</dbReference>
<dbReference type="EMBL" id="EU407790">
    <property type="protein sequence ID" value="ACB06211.1"/>
    <property type="molecule type" value="Genomic_DNA"/>
</dbReference>
<dbReference type="EMBL" id="EU407791">
    <property type="protein sequence ID" value="ACB06223.1"/>
    <property type="molecule type" value="Genomic_DNA"/>
</dbReference>
<dbReference type="EMBL" id="EU407792">
    <property type="protein sequence ID" value="ACB06235.1"/>
    <property type="molecule type" value="Genomic_DNA"/>
</dbReference>
<dbReference type="EMBL" id="EU407793">
    <property type="protein sequence ID" value="ACB06247.1"/>
    <property type="molecule type" value="Genomic_DNA"/>
</dbReference>
<dbReference type="EMBL" id="EU407794">
    <property type="protein sequence ID" value="ACB06259.1"/>
    <property type="molecule type" value="Genomic_DNA"/>
</dbReference>
<dbReference type="EMBL" id="EU407795">
    <property type="protein sequence ID" value="ACB06271.1"/>
    <property type="molecule type" value="Genomic_DNA"/>
</dbReference>
<dbReference type="EMBL" id="EU407796">
    <property type="protein sequence ID" value="ACB06283.1"/>
    <property type="molecule type" value="Genomic_DNA"/>
</dbReference>
<dbReference type="EMBL" id="EU407797">
    <property type="protein sequence ID" value="ACB06295.1"/>
    <property type="molecule type" value="Genomic_DNA"/>
</dbReference>
<dbReference type="EMBL" id="EU407798">
    <property type="protein sequence ID" value="ACB06307.1"/>
    <property type="molecule type" value="Genomic_DNA"/>
</dbReference>
<dbReference type="EMBL" id="EU407799">
    <property type="protein sequence ID" value="ACB06319.1"/>
    <property type="molecule type" value="Genomic_DNA"/>
</dbReference>
<dbReference type="EMBL" id="EU407800">
    <property type="protein sequence ID" value="ACB06331.1"/>
    <property type="molecule type" value="Genomic_DNA"/>
</dbReference>
<dbReference type="EMBL" id="EU407801">
    <property type="protein sequence ID" value="ACB06343.1"/>
    <property type="molecule type" value="Genomic_DNA"/>
</dbReference>
<dbReference type="EMBL" id="EU407802">
    <property type="protein sequence ID" value="ACB06355.1"/>
    <property type="molecule type" value="Genomic_DNA"/>
</dbReference>
<dbReference type="EMBL" id="EU407803">
    <property type="protein sequence ID" value="ACB06367.1"/>
    <property type="molecule type" value="Genomic_DNA"/>
</dbReference>
<dbReference type="EMBL" id="AC186293">
    <property type="status" value="NOT_ANNOTATED_CDS"/>
    <property type="molecule type" value="Genomic_DNA"/>
</dbReference>
<dbReference type="EMBL" id="AY171101">
    <property type="protein sequence ID" value="AAO13508.1"/>
    <property type="molecule type" value="Genomic_DNA"/>
</dbReference>
<dbReference type="RefSeq" id="YP_001504336.1">
    <property type="nucleotide sequence ID" value="NC_009885.1"/>
</dbReference>
<dbReference type="SMR" id="Q8HEC5"/>
<dbReference type="FunCoup" id="Q8HEC5">
    <property type="interactions" value="101"/>
</dbReference>
<dbReference type="STRING" id="6238.Q8HEC5"/>
<dbReference type="GeneID" id="5666628"/>
<dbReference type="KEGG" id="cbr:ATP6"/>
<dbReference type="CTD" id="4508"/>
<dbReference type="InParanoid" id="Q8HEC5"/>
<dbReference type="Proteomes" id="UP000008549">
    <property type="component" value="Mitochondrion"/>
</dbReference>
<dbReference type="GO" id="GO:0005743">
    <property type="term" value="C:mitochondrial inner membrane"/>
    <property type="evidence" value="ECO:0007669"/>
    <property type="project" value="UniProtKB-SubCell"/>
</dbReference>
<dbReference type="GO" id="GO:0045259">
    <property type="term" value="C:proton-transporting ATP synthase complex"/>
    <property type="evidence" value="ECO:0000318"/>
    <property type="project" value="GO_Central"/>
</dbReference>
<dbReference type="GO" id="GO:0015078">
    <property type="term" value="F:proton transmembrane transporter activity"/>
    <property type="evidence" value="ECO:0007669"/>
    <property type="project" value="InterPro"/>
</dbReference>
<dbReference type="GO" id="GO:0015986">
    <property type="term" value="P:proton motive force-driven ATP synthesis"/>
    <property type="evidence" value="ECO:0000318"/>
    <property type="project" value="GO_Central"/>
</dbReference>
<dbReference type="FunFam" id="1.20.120.220:FF:000013">
    <property type="entry name" value="ATP synthase F0 subunit 6"/>
    <property type="match status" value="1"/>
</dbReference>
<dbReference type="Gene3D" id="1.20.120.220">
    <property type="entry name" value="ATP synthase, F0 complex, subunit A"/>
    <property type="match status" value="1"/>
</dbReference>
<dbReference type="InterPro" id="IPR000568">
    <property type="entry name" value="ATP_synth_F0_asu"/>
</dbReference>
<dbReference type="InterPro" id="IPR023011">
    <property type="entry name" value="ATP_synth_F0_asu_AS"/>
</dbReference>
<dbReference type="InterPro" id="IPR045083">
    <property type="entry name" value="ATP_synth_F0_asu_bact/mt"/>
</dbReference>
<dbReference type="InterPro" id="IPR035908">
    <property type="entry name" value="F0_ATP_A_sf"/>
</dbReference>
<dbReference type="PANTHER" id="PTHR11410">
    <property type="entry name" value="ATP SYNTHASE SUBUNIT A"/>
    <property type="match status" value="1"/>
</dbReference>
<dbReference type="PANTHER" id="PTHR11410:SF0">
    <property type="entry name" value="ATP SYNTHASE SUBUNIT A"/>
    <property type="match status" value="1"/>
</dbReference>
<dbReference type="Pfam" id="PF00119">
    <property type="entry name" value="ATP-synt_A"/>
    <property type="match status" value="1"/>
</dbReference>
<dbReference type="SUPFAM" id="SSF81336">
    <property type="entry name" value="F1F0 ATP synthase subunit A"/>
    <property type="match status" value="1"/>
</dbReference>
<dbReference type="PROSITE" id="PS00449">
    <property type="entry name" value="ATPASE_A"/>
    <property type="match status" value="1"/>
</dbReference>
<comment type="function">
    <text>Mitochondrial membrane ATP synthase (F(1)F(0) ATP synthase or Complex V) produces ATP from ADP in the presence of a proton gradient across the membrane which is generated by electron transport complexes of the respiratory chain. F-type ATPases consist of two structural domains, F(1) - containing the extramembraneous catalytic core and F(0) - containing the membrane proton channel, linked together by a central stalk and a peripheral stalk. During catalysis, ATP synthesis in the catalytic domain of F(1) is coupled via a rotary mechanism of the central stalk subunits to proton translocation. Key component of the proton channel; it may play a direct role in the translocation of protons across the membrane.</text>
</comment>
<comment type="subunit">
    <text>F-type ATPases have 2 components, CF(1) - the catalytic core - and CF(0) - the membrane proton channel. CF(1) has five subunits: alpha(3), beta(3), gamma(1), delta(1), epsilon(1). CF(0) has three main subunits: a, b and c.</text>
</comment>
<comment type="subcellular location">
    <subcellularLocation>
        <location>Mitochondrion inner membrane</location>
        <topology>Multi-pass membrane protein</topology>
    </subcellularLocation>
</comment>
<comment type="similarity">
    <text evidence="3">Belongs to the ATPase A chain family.</text>
</comment>
<sequence length="199" mass="23045">MNQVYFLDIFMFVFVLQFLFYFKEGMLNTLVKKFLNSLVGVFSYSNTLPLSSVISVFTFIILLTCCFGGYFTYSFCPCGMVEFTFVYAAVAWLSTLLTFISSEKFSVYMSKPGDTYLKTLSMLLVEIVSEFSRPLALTVRLTVNIMVGHLISMMLYQGLELSMGDQYVWLSIFAIMMECFVFFIQSYIFSRLIFLYLNE</sequence>
<organism>
    <name type="scientific">Caenorhabditis briggsae</name>
    <dbReference type="NCBI Taxonomy" id="6238"/>
    <lineage>
        <taxon>Eukaryota</taxon>
        <taxon>Metazoa</taxon>
        <taxon>Ecdysozoa</taxon>
        <taxon>Nematoda</taxon>
        <taxon>Chromadorea</taxon>
        <taxon>Rhabditida</taxon>
        <taxon>Rhabditina</taxon>
        <taxon>Rhabditomorpha</taxon>
        <taxon>Rhabditoidea</taxon>
        <taxon>Rhabditidae</taxon>
        <taxon>Peloderinae</taxon>
        <taxon>Caenorhabditis</taxon>
    </lineage>
</organism>
<gene>
    <name type="primary">atp6</name>
</gene>
<proteinExistence type="inferred from homology"/>
<evidence type="ECO:0000255" key="1"/>
<evidence type="ECO:0000269" key="2">
    <source>
    </source>
</evidence>
<evidence type="ECO:0000305" key="3"/>
<keyword id="KW-0066">ATP synthesis</keyword>
<keyword id="KW-0138">CF(0)</keyword>
<keyword id="KW-0375">Hydrogen ion transport</keyword>
<keyword id="KW-0406">Ion transport</keyword>
<keyword id="KW-0472">Membrane</keyword>
<keyword id="KW-0496">Mitochondrion</keyword>
<keyword id="KW-0999">Mitochondrion inner membrane</keyword>
<keyword id="KW-1185">Reference proteome</keyword>
<keyword id="KW-0812">Transmembrane</keyword>
<keyword id="KW-1133">Transmembrane helix</keyword>
<keyword id="KW-0813">Transport</keyword>
<reference key="1">
    <citation type="journal article" date="2008" name="BMC Evol. Biol.">
        <title>Muller's Ratchet and compensatory mutation in Caenorhabditis briggsae mitochondrial genome evolution.</title>
        <authorList>
            <person name="Howe D.K."/>
            <person name="Denver D.R."/>
        </authorList>
    </citation>
    <scope>NUCLEOTIDE SEQUENCE [GENOMIC DNA]</scope>
    <scope>VARIANTS GLY-51; LEU-53; TRP-66; PHE-86; ILE-90; ALA-98 AND ILE-168</scope>
    <source>
        <strain>BW287</strain>
        <strain>ED3032</strain>
        <strain>ED3033</strain>
        <strain>ED3034</strain>
        <strain>ED3035</strain>
        <strain>ED3036</strain>
        <strain>ED3037</strain>
        <strain>ED3083</strain>
        <strain>ED3092</strain>
        <strain>ED3101</strain>
        <strain>EG4181</strain>
        <strain>EG4207A</strain>
        <strain>HK104</strain>
        <strain>HK105</strain>
        <strain>JU403</strain>
        <strain>JU439</strain>
        <strain>JU516</strain>
        <strain>JU725</strain>
        <strain>JU726</strain>
        <strain>JU793</strain>
        <strain>PB800</strain>
        <strain>PB826</strain>
        <strain>VT847</strain>
    </source>
</reference>
<reference key="2">
    <citation type="journal article" date="2003" name="PLoS Biol.">
        <title>The genome sequence of Caenorhabditis briggsae: a platform for comparative genomics.</title>
        <authorList>
            <person name="Stein L.D."/>
            <person name="Bao Z."/>
            <person name="Blasiar D."/>
            <person name="Blumenthal T."/>
            <person name="Brent M.R."/>
            <person name="Chen N."/>
            <person name="Chinwalla A."/>
            <person name="Clarke L."/>
            <person name="Clee C."/>
            <person name="Coghlan A."/>
            <person name="Coulson A."/>
            <person name="D'Eustachio P."/>
            <person name="Fitch D.H.A."/>
            <person name="Fulton L.A."/>
            <person name="Fulton R.E."/>
            <person name="Griffiths-Jones S."/>
            <person name="Harris T.W."/>
            <person name="Hillier L.W."/>
            <person name="Kamath R."/>
            <person name="Kuwabara P.E."/>
            <person name="Mardis E.R."/>
            <person name="Marra M.A."/>
            <person name="Miner T.L."/>
            <person name="Minx P."/>
            <person name="Mullikin J.C."/>
            <person name="Plumb R.W."/>
            <person name="Rogers J."/>
            <person name="Schein J.E."/>
            <person name="Sohrmann M."/>
            <person name="Spieth J."/>
            <person name="Stajich J.E."/>
            <person name="Wei C."/>
            <person name="Willey D."/>
            <person name="Wilson R.K."/>
            <person name="Durbin R.M."/>
            <person name="Waterston R.H."/>
        </authorList>
    </citation>
    <scope>NUCLEOTIDE SEQUENCE [LARGE SCALE GENOMIC DNA]</scope>
    <source>
        <strain>AF16</strain>
    </source>
</reference>
<reference key="3">
    <citation type="journal article" date="2003" name="Mol. Biol. Evol.">
        <title>Phylogenetics in Caenorhabditis elegans: an analysis of divergence and outcrossing.</title>
        <authorList>
            <person name="Denver D.R."/>
            <person name="Morris K."/>
            <person name="Thomas W.K."/>
        </authorList>
    </citation>
    <scope>NUCLEOTIDE SEQUENCE [GENOMIC DNA] OF 1-86</scope>
    <source>
        <strain>PB800</strain>
    </source>
</reference>
<geneLocation type="mitochondrion"/>
<name>ATP6_CAEBR</name>
<feature type="chain" id="PRO_0000082100" description="ATP synthase subunit a">
    <location>
        <begin position="1"/>
        <end position="199"/>
    </location>
</feature>
<feature type="transmembrane region" description="Helical" evidence="1">
    <location>
        <begin position="2"/>
        <end position="22"/>
    </location>
</feature>
<feature type="transmembrane region" description="Helical" evidence="1">
    <location>
        <begin position="53"/>
        <end position="73"/>
    </location>
</feature>
<feature type="transmembrane region" description="Helical" evidence="1">
    <location>
        <begin position="80"/>
        <end position="100"/>
    </location>
</feature>
<feature type="transmembrane region" description="Helical" evidence="1">
    <location>
        <begin position="141"/>
        <end position="161"/>
    </location>
</feature>
<feature type="transmembrane region" description="Helical" evidence="1">
    <location>
        <begin position="169"/>
        <end position="189"/>
    </location>
</feature>
<feature type="sequence variant" description="In strain: VT847." evidence="2">
    <original>S</original>
    <variation>G</variation>
    <location>
        <position position="51"/>
    </location>
</feature>
<feature type="sequence variant" description="In strain: VT847." evidence="2">
    <original>V</original>
    <variation>L</variation>
    <location>
        <position position="53"/>
    </location>
</feature>
<feature type="sequence variant" description="In strain: VT847." evidence="2">
    <original>C</original>
    <variation>W</variation>
    <location>
        <position position="66"/>
    </location>
</feature>
<feature type="sequence variant" description="In strain: ED3032 and ED3036." evidence="2">
    <original>V</original>
    <variation>F</variation>
    <location>
        <position position="86"/>
    </location>
</feature>
<feature type="sequence variant" description="In strain: VT847." evidence="2">
    <original>V</original>
    <variation>I</variation>
    <location>
        <position position="90"/>
    </location>
</feature>
<feature type="sequence variant" description="In strain: EG4181." evidence="2">
    <original>T</original>
    <variation>A</variation>
    <location>
        <position position="98"/>
    </location>
</feature>
<feature type="sequence variant" description="In strain: ED3092 and ED3101." evidence="2">
    <original>V</original>
    <variation>I</variation>
    <location>
        <position position="168"/>
    </location>
</feature>
<feature type="sequence conflict" description="In Ref. 2; AC186293." evidence="3" ref="2">
    <original>M</original>
    <variation>I</variation>
    <location>
        <position position="11"/>
    </location>
</feature>
<feature type="sequence conflict" description="In Ref. 2; AC186293." evidence="3" ref="2">
    <original>SYS</original>
    <variation>RYR</variation>
    <location>
        <begin position="43"/>
        <end position="45"/>
    </location>
</feature>
<feature type="sequence conflict" description="In Ref. 2; AC186293." evidence="3" ref="2">
    <original>M</original>
    <variation>I</variation>
    <location>
        <position position="80"/>
    </location>
</feature>
<feature type="sequence conflict" description="In Ref. 2; AC186293." evidence="3" ref="2">
    <original>S</original>
    <variation>R</variation>
    <location>
        <position position="102"/>
    </location>
</feature>
<feature type="sequence conflict" description="In Ref. 2; AC186293." evidence="3" ref="2">
    <original>M</original>
    <variation>I</variation>
    <location>
        <position position="109"/>
    </location>
</feature>
<feature type="sequence conflict" description="In Ref. 2; AC186293." evidence="3" ref="2">
    <original>SM</original>
    <variation>RI</variation>
    <location>
        <begin position="121"/>
        <end position="122"/>
    </location>
</feature>
<feature type="sequence conflict" description="In Ref. 2; AC186293." evidence="3" ref="2">
    <original>S</original>
    <variation>R</variation>
    <location>
        <position position="129"/>
    </location>
</feature>
<feature type="sequence conflict" description="In Ref. 2; AC186293." evidence="3" ref="2">
    <original>SM</original>
    <variation>RI</variation>
    <location>
        <begin position="152"/>
        <end position="153"/>
    </location>
</feature>
<feature type="sequence conflict" description="In Ref. 2; AC186293." evidence="3" ref="2">
    <original>S</original>
    <variation>R</variation>
    <location>
        <position position="162"/>
    </location>
</feature>
<feature type="sequence conflict" description="In Ref. 2; AC186293." evidence="3" ref="2">
    <original>M</original>
    <variation>I</variation>
    <location>
        <position position="177"/>
    </location>
</feature>
<protein>
    <recommendedName>
        <fullName>ATP synthase subunit a</fullName>
    </recommendedName>
    <alternativeName>
        <fullName>F-ATPase protein 6</fullName>
    </alternativeName>
</protein>
<accession>Q8HEC5</accession>
<accession>B1PE36</accession>
<accession>B1PE48</accession>
<accession>B1PED2</accession>
<accession>B1PEF6</accession>
<accession>B1PEV0</accession>